<dbReference type="EC" id="1.14.14.154"/>
<dbReference type="EMBL" id="AE016817">
    <property type="protein sequence ID" value="AAS52083.1"/>
    <property type="molecule type" value="Genomic_DNA"/>
</dbReference>
<dbReference type="RefSeq" id="NP_984259.1">
    <property type="nucleotide sequence ID" value="NM_209612.1"/>
</dbReference>
<dbReference type="SMR" id="Q759W0"/>
<dbReference type="FunCoup" id="Q759W0">
    <property type="interactions" value="599"/>
</dbReference>
<dbReference type="STRING" id="284811.Q759W0"/>
<dbReference type="EnsemblFungi" id="AAS52083">
    <property type="protein sequence ID" value="AAS52083"/>
    <property type="gene ID" value="AGOS_ADR162W"/>
</dbReference>
<dbReference type="GeneID" id="4620421"/>
<dbReference type="KEGG" id="ago:AGOS_ADR162W"/>
<dbReference type="eggNOG" id="KOG0684">
    <property type="taxonomic scope" value="Eukaryota"/>
</dbReference>
<dbReference type="HOGENOM" id="CLU_001570_15_0_1"/>
<dbReference type="InParanoid" id="Q759W0"/>
<dbReference type="OMA" id="HWFPFVG"/>
<dbReference type="OrthoDB" id="1055148at2759"/>
<dbReference type="UniPathway" id="UPA00770">
    <property type="reaction ID" value="UER00754"/>
</dbReference>
<dbReference type="Proteomes" id="UP000000591">
    <property type="component" value="Chromosome IV"/>
</dbReference>
<dbReference type="GO" id="GO:0032541">
    <property type="term" value="C:cortical endoplasmic reticulum"/>
    <property type="evidence" value="ECO:0007669"/>
    <property type="project" value="EnsemblFungi"/>
</dbReference>
<dbReference type="GO" id="GO:0016020">
    <property type="term" value="C:membrane"/>
    <property type="evidence" value="ECO:0007669"/>
    <property type="project" value="UniProtKB-SubCell"/>
</dbReference>
<dbReference type="GO" id="GO:0097038">
    <property type="term" value="C:perinuclear endoplasmic reticulum"/>
    <property type="evidence" value="ECO:0007669"/>
    <property type="project" value="EnsemblFungi"/>
</dbReference>
<dbReference type="GO" id="GO:0020037">
    <property type="term" value="F:heme binding"/>
    <property type="evidence" value="ECO:0007669"/>
    <property type="project" value="InterPro"/>
</dbReference>
<dbReference type="GO" id="GO:0005506">
    <property type="term" value="F:iron ion binding"/>
    <property type="evidence" value="ECO:0007669"/>
    <property type="project" value="InterPro"/>
</dbReference>
<dbReference type="GO" id="GO:0016491">
    <property type="term" value="F:oxidoreductase activity"/>
    <property type="evidence" value="ECO:0000318"/>
    <property type="project" value="GO_Central"/>
</dbReference>
<dbReference type="GO" id="GO:0008398">
    <property type="term" value="F:sterol 14-demethylase activity"/>
    <property type="evidence" value="ECO:0007669"/>
    <property type="project" value="UniProtKB-EC"/>
</dbReference>
<dbReference type="GO" id="GO:0006696">
    <property type="term" value="P:ergosterol biosynthetic process"/>
    <property type="evidence" value="ECO:0000318"/>
    <property type="project" value="GO_Central"/>
</dbReference>
<dbReference type="CDD" id="cd11042">
    <property type="entry name" value="CYP51-like"/>
    <property type="match status" value="1"/>
</dbReference>
<dbReference type="FunFam" id="1.10.630.10:FF:000033">
    <property type="entry name" value="14-alpha sterol demethylase"/>
    <property type="match status" value="1"/>
</dbReference>
<dbReference type="Gene3D" id="1.10.630.10">
    <property type="entry name" value="Cytochrome P450"/>
    <property type="match status" value="1"/>
</dbReference>
<dbReference type="InterPro" id="IPR050529">
    <property type="entry name" value="CYP450_sterol_14alpha_dmase"/>
</dbReference>
<dbReference type="InterPro" id="IPR001128">
    <property type="entry name" value="Cyt_P450"/>
</dbReference>
<dbReference type="InterPro" id="IPR017972">
    <property type="entry name" value="Cyt_P450_CS"/>
</dbReference>
<dbReference type="InterPro" id="IPR002403">
    <property type="entry name" value="Cyt_P450_E_grp-IV"/>
</dbReference>
<dbReference type="InterPro" id="IPR036396">
    <property type="entry name" value="Cyt_P450_sf"/>
</dbReference>
<dbReference type="PANTHER" id="PTHR24304:SF2">
    <property type="entry name" value="24-HYDROXYCHOLESTEROL 7-ALPHA-HYDROXYLASE"/>
    <property type="match status" value="1"/>
</dbReference>
<dbReference type="PANTHER" id="PTHR24304">
    <property type="entry name" value="CYTOCHROME P450 FAMILY 7"/>
    <property type="match status" value="1"/>
</dbReference>
<dbReference type="Pfam" id="PF00067">
    <property type="entry name" value="p450"/>
    <property type="match status" value="1"/>
</dbReference>
<dbReference type="PRINTS" id="PR00465">
    <property type="entry name" value="EP450IV"/>
</dbReference>
<dbReference type="PRINTS" id="PR00385">
    <property type="entry name" value="P450"/>
</dbReference>
<dbReference type="SUPFAM" id="SSF48264">
    <property type="entry name" value="Cytochrome P450"/>
    <property type="match status" value="1"/>
</dbReference>
<dbReference type="PROSITE" id="PS00086">
    <property type="entry name" value="CYTOCHROME_P450"/>
    <property type="match status" value="1"/>
</dbReference>
<accession>Q759W0</accession>
<proteinExistence type="inferred from homology"/>
<gene>
    <name type="primary">ERG11</name>
    <name type="synonym">CYP51</name>
    <name type="ordered locus">ADR162W</name>
</gene>
<organism>
    <name type="scientific">Eremothecium gossypii (strain ATCC 10895 / CBS 109.51 / FGSC 9923 / NRRL Y-1056)</name>
    <name type="common">Yeast</name>
    <name type="synonym">Ashbya gossypii</name>
    <dbReference type="NCBI Taxonomy" id="284811"/>
    <lineage>
        <taxon>Eukaryota</taxon>
        <taxon>Fungi</taxon>
        <taxon>Dikarya</taxon>
        <taxon>Ascomycota</taxon>
        <taxon>Saccharomycotina</taxon>
        <taxon>Saccharomycetes</taxon>
        <taxon>Saccharomycetales</taxon>
        <taxon>Saccharomycetaceae</taxon>
        <taxon>Eremothecium</taxon>
    </lineage>
</organism>
<sequence length="529" mass="60506">MSESLLQTVVAYVELVLHHFMALSWTQQLSIVIVAPFIYSLVWQTLYSFRKDRVPLVPFMVPWVGSALAYGRAPYEFFGKCQQKYGDVFAFMLLGRVMTVYLGTKGHEFILNAKLAEVSAEEAYTKLTTPVFGEGVVYDCPNHRLMEQKKFCKNALSTEAFRRYVPMVMDEVRKYLRTSKHFMMNERSSGVVNVMETQPEMTIFTASRSLLGAEMHSMLDADFAYLYADLDKGFTPLNFVFRDLPLDNYRRRDNAQRTISSTYMKVIERRRKNNDVQDRDLIDALMTSAQYKDGVKMTDQQIANLLIGVLMGGQHTSAATSAWVLLHLAERPDIQEELYEEQMRVLDGGAKELTYELLQEMPLLNQVIKETLRMHHPLHSLFRKVTRDMPVPNTSYVIPKDHYVLASPGFCHLSEEYFPNAKEFNPHRWDNDAASSVSTGEKVDYGFGAISKGVSSPYLPFGGGRHRCIGEGFAYMQLGTIFSVVVRSMKWHFPADMKGVPNPDFTSMVTLPSEPCRIAWERRVPDQII</sequence>
<protein>
    <recommendedName>
        <fullName>Lanosterol 14-alpha demethylase</fullName>
        <ecNumber>1.14.14.154</ecNumber>
    </recommendedName>
    <alternativeName>
        <fullName>CYPLI</fullName>
    </alternativeName>
    <alternativeName>
        <fullName>Cytochrome P450 51</fullName>
    </alternativeName>
    <alternativeName>
        <fullName>Cytochrome P450-14DM</fullName>
    </alternativeName>
    <alternativeName>
        <fullName>Cytochrome P450-LIA1</fullName>
    </alternativeName>
    <alternativeName>
        <fullName>Sterol 14-alpha demethylase</fullName>
    </alternativeName>
</protein>
<evidence type="ECO:0000250" key="1"/>
<evidence type="ECO:0000250" key="2">
    <source>
        <dbReference type="UniProtKB" id="P10613"/>
    </source>
</evidence>
<evidence type="ECO:0000250" key="3">
    <source>
        <dbReference type="UniProtKB" id="P10614"/>
    </source>
</evidence>
<evidence type="ECO:0000250" key="4">
    <source>
        <dbReference type="UniProtKB" id="Q4WNT5"/>
    </source>
</evidence>
<evidence type="ECO:0000305" key="5"/>
<feature type="chain" id="PRO_0000052002" description="Lanosterol 14-alpha demethylase">
    <location>
        <begin position="1"/>
        <end position="529"/>
    </location>
</feature>
<feature type="binding site" description="axial binding residue" evidence="1">
    <location>
        <position position="468"/>
    </location>
    <ligand>
        <name>heme</name>
        <dbReference type="ChEBI" id="CHEBI:30413"/>
    </ligand>
    <ligandPart>
        <name>Fe</name>
        <dbReference type="ChEBI" id="CHEBI:18248"/>
    </ligandPart>
</feature>
<reference key="1">
    <citation type="journal article" date="2004" name="Science">
        <title>The Ashbya gossypii genome as a tool for mapping the ancient Saccharomyces cerevisiae genome.</title>
        <authorList>
            <person name="Dietrich F.S."/>
            <person name="Voegeli S."/>
            <person name="Brachat S."/>
            <person name="Lerch A."/>
            <person name="Gates K."/>
            <person name="Steiner S."/>
            <person name="Mohr C."/>
            <person name="Poehlmann R."/>
            <person name="Luedi P."/>
            <person name="Choi S."/>
            <person name="Wing R.A."/>
            <person name="Flavier A."/>
            <person name="Gaffney T.D."/>
            <person name="Philippsen P."/>
        </authorList>
    </citation>
    <scope>NUCLEOTIDE SEQUENCE [LARGE SCALE GENOMIC DNA]</scope>
    <source>
        <strain>ATCC 10895 / CBS 109.51 / FGSC 9923 / NRRL Y-1056</strain>
    </source>
</reference>
<reference key="2">
    <citation type="journal article" date="2013" name="G3 (Bethesda)">
        <title>Genomes of Ashbya fungi isolated from insects reveal four mating-type loci, numerous translocations, lack of transposons, and distinct gene duplications.</title>
        <authorList>
            <person name="Dietrich F.S."/>
            <person name="Voegeli S."/>
            <person name="Kuo S."/>
            <person name="Philippsen P."/>
        </authorList>
    </citation>
    <scope>GENOME REANNOTATION</scope>
    <source>
        <strain>ATCC 10895 / CBS 109.51 / FGSC 9923 / NRRL Y-1056</strain>
    </source>
</reference>
<keyword id="KW-0349">Heme</keyword>
<keyword id="KW-0408">Iron</keyword>
<keyword id="KW-0444">Lipid biosynthesis</keyword>
<keyword id="KW-0443">Lipid metabolism</keyword>
<keyword id="KW-0472">Membrane</keyword>
<keyword id="KW-0479">Metal-binding</keyword>
<keyword id="KW-0503">Monooxygenase</keyword>
<keyword id="KW-0560">Oxidoreductase</keyword>
<keyword id="KW-1185">Reference proteome</keyword>
<keyword id="KW-0752">Steroid biosynthesis</keyword>
<keyword id="KW-0753">Steroid metabolism</keyword>
<keyword id="KW-0756">Sterol biosynthesis</keyword>
<keyword id="KW-1207">Sterol metabolism</keyword>
<name>CP51_EREGS</name>
<comment type="function">
    <text evidence="2 3 4">Sterol 14alpha-demethylase that plays a critical role in the third module of ergosterol biosynthesis pathway, being ergosterol the major sterol component in fungal membranes that participates in a variety of functions (By similarity). The third module or late pathway involves the ergosterol synthesis itself through consecutive reactions that mainly occur in the endoplasmic reticulum (ER) membrane (By similarity). In filamentous fungi, during the initial step of this module, lanosterol (lanosta-8,24-dien-3beta-ol) can be metabolized to eburicol (By similarity). Sterol 14alpha-demethylase catalyzes the three-step oxidative removal of the 14alpha-methyl group (C-32) of both these sterols in the form of formate, and converts eburicol and lanosterol to 14-demethyleburicol (4,4,24-trimethylergosta-8,14,24(28)-trienol) and 4,4-dimethyl-5alpha-cholesta-8,14,24-trien-3beta-ol, respectively, which are further metabolized by other enzymes in the pathway to ergosterol (By similarity). Can also use substrates not intrinsic to fungi, such as 24,25-dihydrolanosterol (DHL), producing 4,4-dimethyl-8,14-cholestadien-3-beta-ol, but at lower rates than the endogenous substrates (By similarity).</text>
</comment>
<comment type="catalytic activity">
    <reaction evidence="3">
        <text>a 14alpha-methyl steroid + 3 reduced [NADPH--hemoprotein reductase] + 3 O2 = a Delta(14) steroid + formate + 3 oxidized [NADPH--hemoprotein reductase] + 4 H2O + 4 H(+)</text>
        <dbReference type="Rhea" id="RHEA:54028"/>
        <dbReference type="Rhea" id="RHEA-COMP:11964"/>
        <dbReference type="Rhea" id="RHEA-COMP:11965"/>
        <dbReference type="ChEBI" id="CHEBI:15377"/>
        <dbReference type="ChEBI" id="CHEBI:15378"/>
        <dbReference type="ChEBI" id="CHEBI:15379"/>
        <dbReference type="ChEBI" id="CHEBI:15740"/>
        <dbReference type="ChEBI" id="CHEBI:57618"/>
        <dbReference type="ChEBI" id="CHEBI:58210"/>
        <dbReference type="ChEBI" id="CHEBI:138029"/>
        <dbReference type="ChEBI" id="CHEBI:138031"/>
        <dbReference type="EC" id="1.14.14.154"/>
    </reaction>
    <physiologicalReaction direction="left-to-right" evidence="3">
        <dbReference type="Rhea" id="RHEA:54029"/>
    </physiologicalReaction>
</comment>
<comment type="catalytic activity">
    <reaction evidence="3">
        <text>a 14alpha-methyl steroid + reduced [NADPH--hemoprotein reductase] + O2 = a 14alpha-hydroxymethyl steroid + oxidized [NADPH--hemoprotein reductase] + H2O + H(+)</text>
        <dbReference type="Rhea" id="RHEA:68060"/>
        <dbReference type="Rhea" id="RHEA-COMP:11964"/>
        <dbReference type="Rhea" id="RHEA-COMP:11965"/>
        <dbReference type="ChEBI" id="CHEBI:15377"/>
        <dbReference type="ChEBI" id="CHEBI:15378"/>
        <dbReference type="ChEBI" id="CHEBI:15379"/>
        <dbReference type="ChEBI" id="CHEBI:57618"/>
        <dbReference type="ChEBI" id="CHEBI:58210"/>
        <dbReference type="ChEBI" id="CHEBI:138029"/>
        <dbReference type="ChEBI" id="CHEBI:176901"/>
    </reaction>
    <physiologicalReaction direction="left-to-right" evidence="3">
        <dbReference type="Rhea" id="RHEA:68061"/>
    </physiologicalReaction>
</comment>
<comment type="catalytic activity">
    <reaction evidence="3">
        <text>a 14alpha-hydroxymethyl steroid + reduced [NADPH--hemoprotein reductase] + O2 = a 14alpha-formyl steroid + oxidized [NADPH--hemoprotein reductase] + 2 H2O + H(+)</text>
        <dbReference type="Rhea" id="RHEA:68064"/>
        <dbReference type="Rhea" id="RHEA-COMP:11964"/>
        <dbReference type="Rhea" id="RHEA-COMP:11965"/>
        <dbReference type="ChEBI" id="CHEBI:15377"/>
        <dbReference type="ChEBI" id="CHEBI:15378"/>
        <dbReference type="ChEBI" id="CHEBI:15379"/>
        <dbReference type="ChEBI" id="CHEBI:57618"/>
        <dbReference type="ChEBI" id="CHEBI:58210"/>
        <dbReference type="ChEBI" id="CHEBI:176901"/>
        <dbReference type="ChEBI" id="CHEBI:176902"/>
    </reaction>
    <physiologicalReaction direction="left-to-right" evidence="3">
        <dbReference type="Rhea" id="RHEA:68065"/>
    </physiologicalReaction>
</comment>
<comment type="catalytic activity">
    <reaction evidence="3">
        <text>a 14alpha-formyl steroid + reduced [NADPH--hemoprotein reductase] + O2 = a Delta(14) steroid + formate + oxidized [NADPH--hemoprotein reductase] + H2O + 2 H(+)</text>
        <dbReference type="Rhea" id="RHEA:68068"/>
        <dbReference type="Rhea" id="RHEA-COMP:11964"/>
        <dbReference type="Rhea" id="RHEA-COMP:11965"/>
        <dbReference type="ChEBI" id="CHEBI:15377"/>
        <dbReference type="ChEBI" id="CHEBI:15378"/>
        <dbReference type="ChEBI" id="CHEBI:15379"/>
        <dbReference type="ChEBI" id="CHEBI:15740"/>
        <dbReference type="ChEBI" id="CHEBI:57618"/>
        <dbReference type="ChEBI" id="CHEBI:58210"/>
        <dbReference type="ChEBI" id="CHEBI:138031"/>
        <dbReference type="ChEBI" id="CHEBI:176902"/>
    </reaction>
    <physiologicalReaction direction="left-to-right" evidence="3">
        <dbReference type="Rhea" id="RHEA:68069"/>
    </physiologicalReaction>
</comment>
<comment type="catalytic activity">
    <reaction evidence="3">
        <text>lanosterol + 3 reduced [NADPH--hemoprotein reductase] + 3 O2 = 4,4-dimethyl-5alpha-cholesta-8,14,24-trien-3beta-ol + formate + 3 oxidized [NADPH--hemoprotein reductase] + 4 H2O + 4 H(+)</text>
        <dbReference type="Rhea" id="RHEA:25286"/>
        <dbReference type="Rhea" id="RHEA-COMP:11964"/>
        <dbReference type="Rhea" id="RHEA-COMP:11965"/>
        <dbReference type="ChEBI" id="CHEBI:15377"/>
        <dbReference type="ChEBI" id="CHEBI:15378"/>
        <dbReference type="ChEBI" id="CHEBI:15379"/>
        <dbReference type="ChEBI" id="CHEBI:15740"/>
        <dbReference type="ChEBI" id="CHEBI:16521"/>
        <dbReference type="ChEBI" id="CHEBI:17813"/>
        <dbReference type="ChEBI" id="CHEBI:57618"/>
        <dbReference type="ChEBI" id="CHEBI:58210"/>
        <dbReference type="EC" id="1.14.14.154"/>
    </reaction>
    <physiologicalReaction direction="left-to-right" evidence="3">
        <dbReference type="Rhea" id="RHEA:25287"/>
    </physiologicalReaction>
</comment>
<comment type="catalytic activity">
    <reaction evidence="3">
        <text>lanosterol + reduced [NADPH--hemoprotein reductase] + O2 = 32-hydroxylanosterol + oxidized [NADPH--hemoprotein reductase] + H2O + H(+)</text>
        <dbReference type="Rhea" id="RHEA:75103"/>
        <dbReference type="Rhea" id="RHEA-COMP:11964"/>
        <dbReference type="Rhea" id="RHEA-COMP:11965"/>
        <dbReference type="ChEBI" id="CHEBI:15377"/>
        <dbReference type="ChEBI" id="CHEBI:15378"/>
        <dbReference type="ChEBI" id="CHEBI:15379"/>
        <dbReference type="ChEBI" id="CHEBI:16521"/>
        <dbReference type="ChEBI" id="CHEBI:57618"/>
        <dbReference type="ChEBI" id="CHEBI:58210"/>
        <dbReference type="ChEBI" id="CHEBI:166806"/>
    </reaction>
    <physiologicalReaction direction="left-to-right" evidence="3">
        <dbReference type="Rhea" id="RHEA:75104"/>
    </physiologicalReaction>
</comment>
<comment type="catalytic activity">
    <reaction evidence="3">
        <text>32-hydroxylanosterol + reduced [NADPH--hemoprotein reductase] + O2 = 32-oxolanosterol + oxidized [NADPH--hemoprotein reductase] + 2 H2O + H(+)</text>
        <dbReference type="Rhea" id="RHEA:75107"/>
        <dbReference type="Rhea" id="RHEA-COMP:11964"/>
        <dbReference type="Rhea" id="RHEA-COMP:11965"/>
        <dbReference type="ChEBI" id="CHEBI:15377"/>
        <dbReference type="ChEBI" id="CHEBI:15378"/>
        <dbReference type="ChEBI" id="CHEBI:15379"/>
        <dbReference type="ChEBI" id="CHEBI:57618"/>
        <dbReference type="ChEBI" id="CHEBI:58210"/>
        <dbReference type="ChEBI" id="CHEBI:166681"/>
        <dbReference type="ChEBI" id="CHEBI:166806"/>
    </reaction>
    <physiologicalReaction direction="left-to-right" evidence="3">
        <dbReference type="Rhea" id="RHEA:75108"/>
    </physiologicalReaction>
</comment>
<comment type="catalytic activity">
    <reaction evidence="3">
        <text>32-oxolanosterol + reduced [NADPH--hemoprotein reductase] + O2 = 4,4-dimethyl-5alpha-cholesta-8,14,24-trien-3beta-ol + formate + oxidized [NADPH--hemoprotein reductase] + H2O + 2 H(+)</text>
        <dbReference type="Rhea" id="RHEA:75111"/>
        <dbReference type="Rhea" id="RHEA-COMP:11964"/>
        <dbReference type="Rhea" id="RHEA-COMP:11965"/>
        <dbReference type="ChEBI" id="CHEBI:15377"/>
        <dbReference type="ChEBI" id="CHEBI:15378"/>
        <dbReference type="ChEBI" id="CHEBI:15379"/>
        <dbReference type="ChEBI" id="CHEBI:15740"/>
        <dbReference type="ChEBI" id="CHEBI:17813"/>
        <dbReference type="ChEBI" id="CHEBI:57618"/>
        <dbReference type="ChEBI" id="CHEBI:58210"/>
        <dbReference type="ChEBI" id="CHEBI:166681"/>
    </reaction>
    <physiologicalReaction direction="left-to-right" evidence="3">
        <dbReference type="Rhea" id="RHEA:75112"/>
    </physiologicalReaction>
</comment>
<comment type="catalytic activity">
    <reaction evidence="2">
        <text>eburicol + 3 reduced [NADPH--hemoprotein reductase] + 3 O2 = 14-demethyleburicol + formate + 3 oxidized [NADPH--hemoprotein reductase] + 4 H2O + 4 H(+)</text>
        <dbReference type="Rhea" id="RHEA:75439"/>
        <dbReference type="Rhea" id="RHEA-COMP:11964"/>
        <dbReference type="Rhea" id="RHEA-COMP:11965"/>
        <dbReference type="ChEBI" id="CHEBI:15377"/>
        <dbReference type="ChEBI" id="CHEBI:15378"/>
        <dbReference type="ChEBI" id="CHEBI:15379"/>
        <dbReference type="ChEBI" id="CHEBI:15740"/>
        <dbReference type="ChEBI" id="CHEBI:57618"/>
        <dbReference type="ChEBI" id="CHEBI:58210"/>
        <dbReference type="ChEBI" id="CHEBI:70315"/>
        <dbReference type="ChEBI" id="CHEBI:194330"/>
    </reaction>
    <physiologicalReaction direction="left-to-right" evidence="2">
        <dbReference type="Rhea" id="RHEA:75440"/>
    </physiologicalReaction>
</comment>
<comment type="catalytic activity">
    <reaction evidence="3">
        <text>eburicol + reduced [NADPH--hemoprotein reductase] + O2 = 32-hydroxyeburicol + oxidized [NADPH--hemoprotein reductase] + H2O + H(+)</text>
        <dbReference type="Rhea" id="RHEA:75427"/>
        <dbReference type="Rhea" id="RHEA-COMP:11964"/>
        <dbReference type="Rhea" id="RHEA-COMP:11965"/>
        <dbReference type="ChEBI" id="CHEBI:15377"/>
        <dbReference type="ChEBI" id="CHEBI:15378"/>
        <dbReference type="ChEBI" id="CHEBI:15379"/>
        <dbReference type="ChEBI" id="CHEBI:57618"/>
        <dbReference type="ChEBI" id="CHEBI:58210"/>
        <dbReference type="ChEBI" id="CHEBI:70315"/>
        <dbReference type="ChEBI" id="CHEBI:194328"/>
    </reaction>
    <physiologicalReaction direction="left-to-right" evidence="3">
        <dbReference type="Rhea" id="RHEA:75428"/>
    </physiologicalReaction>
</comment>
<comment type="catalytic activity">
    <reaction evidence="3">
        <text>32-hydroxyeburicol + reduced [NADPH--hemoprotein reductase] + O2 = 32-oxoeburicol + oxidized [NADPH--hemoprotein reductase] + 2 H2O + H(+)</text>
        <dbReference type="Rhea" id="RHEA:75431"/>
        <dbReference type="Rhea" id="RHEA-COMP:11964"/>
        <dbReference type="Rhea" id="RHEA-COMP:11965"/>
        <dbReference type="ChEBI" id="CHEBI:15377"/>
        <dbReference type="ChEBI" id="CHEBI:15378"/>
        <dbReference type="ChEBI" id="CHEBI:15379"/>
        <dbReference type="ChEBI" id="CHEBI:57618"/>
        <dbReference type="ChEBI" id="CHEBI:58210"/>
        <dbReference type="ChEBI" id="CHEBI:194328"/>
        <dbReference type="ChEBI" id="CHEBI:194329"/>
    </reaction>
    <physiologicalReaction direction="left-to-right" evidence="3">
        <dbReference type="Rhea" id="RHEA:75432"/>
    </physiologicalReaction>
</comment>
<comment type="catalytic activity">
    <reaction evidence="3">
        <text>32-oxoeburicol + reduced [NADPH--hemoprotein reductase] + O2 = 14-demethyleburicol + formate + oxidized [NADPH--hemoprotein reductase] + H2O + 2 H(+)</text>
        <dbReference type="Rhea" id="RHEA:75435"/>
        <dbReference type="Rhea" id="RHEA-COMP:11964"/>
        <dbReference type="Rhea" id="RHEA-COMP:11965"/>
        <dbReference type="ChEBI" id="CHEBI:15377"/>
        <dbReference type="ChEBI" id="CHEBI:15378"/>
        <dbReference type="ChEBI" id="CHEBI:15379"/>
        <dbReference type="ChEBI" id="CHEBI:15740"/>
        <dbReference type="ChEBI" id="CHEBI:57618"/>
        <dbReference type="ChEBI" id="CHEBI:58210"/>
        <dbReference type="ChEBI" id="CHEBI:194329"/>
        <dbReference type="ChEBI" id="CHEBI:194330"/>
    </reaction>
    <physiologicalReaction direction="left-to-right" evidence="3">
        <dbReference type="Rhea" id="RHEA:75436"/>
    </physiologicalReaction>
</comment>
<comment type="cofactor">
    <cofactor evidence="1">
        <name>heme</name>
        <dbReference type="ChEBI" id="CHEBI:30413"/>
    </cofactor>
</comment>
<comment type="pathway">
    <text>Steroid biosynthesis; zymosterol biosynthesis; zymosterol from lanosterol: step 1/6.</text>
</comment>
<comment type="subcellular location">
    <subcellularLocation>
        <location evidence="5">Membrane</location>
    </subcellularLocation>
</comment>
<comment type="similarity">
    <text evidence="5">Belongs to the cytochrome P450 family.</text>
</comment>